<dbReference type="EMBL" id="CP001099">
    <property type="protein sequence ID" value="ACF12277.1"/>
    <property type="molecule type" value="Genomic_DNA"/>
</dbReference>
<dbReference type="SMR" id="B3QQS4"/>
<dbReference type="STRING" id="517417.Cpar_1885"/>
<dbReference type="KEGG" id="cpc:Cpar_1885"/>
<dbReference type="eggNOG" id="COG0244">
    <property type="taxonomic scope" value="Bacteria"/>
</dbReference>
<dbReference type="HOGENOM" id="CLU_092227_3_0_10"/>
<dbReference type="Proteomes" id="UP000008811">
    <property type="component" value="Chromosome"/>
</dbReference>
<dbReference type="GO" id="GO:0015934">
    <property type="term" value="C:large ribosomal subunit"/>
    <property type="evidence" value="ECO:0007669"/>
    <property type="project" value="InterPro"/>
</dbReference>
<dbReference type="GO" id="GO:0070180">
    <property type="term" value="F:large ribosomal subunit rRNA binding"/>
    <property type="evidence" value="ECO:0007669"/>
    <property type="project" value="UniProtKB-UniRule"/>
</dbReference>
<dbReference type="GO" id="GO:0003735">
    <property type="term" value="F:structural constituent of ribosome"/>
    <property type="evidence" value="ECO:0007669"/>
    <property type="project" value="InterPro"/>
</dbReference>
<dbReference type="GO" id="GO:0006412">
    <property type="term" value="P:translation"/>
    <property type="evidence" value="ECO:0007669"/>
    <property type="project" value="UniProtKB-UniRule"/>
</dbReference>
<dbReference type="CDD" id="cd05797">
    <property type="entry name" value="Ribosomal_L10"/>
    <property type="match status" value="1"/>
</dbReference>
<dbReference type="Gene3D" id="3.30.70.1730">
    <property type="match status" value="1"/>
</dbReference>
<dbReference type="HAMAP" id="MF_00362">
    <property type="entry name" value="Ribosomal_uL10"/>
    <property type="match status" value="1"/>
</dbReference>
<dbReference type="InterPro" id="IPR001790">
    <property type="entry name" value="Ribosomal_uL10"/>
</dbReference>
<dbReference type="InterPro" id="IPR043141">
    <property type="entry name" value="Ribosomal_uL10-like_sf"/>
</dbReference>
<dbReference type="InterPro" id="IPR022973">
    <property type="entry name" value="Ribosomal_uL10_bac"/>
</dbReference>
<dbReference type="InterPro" id="IPR047865">
    <property type="entry name" value="Ribosomal_uL10_bac_type"/>
</dbReference>
<dbReference type="InterPro" id="IPR002363">
    <property type="entry name" value="Ribosomal_uL10_CS_bac"/>
</dbReference>
<dbReference type="NCBIfam" id="NF000955">
    <property type="entry name" value="PRK00099.1-1"/>
    <property type="match status" value="1"/>
</dbReference>
<dbReference type="PANTHER" id="PTHR11560">
    <property type="entry name" value="39S RIBOSOMAL PROTEIN L10, MITOCHONDRIAL"/>
    <property type="match status" value="1"/>
</dbReference>
<dbReference type="Pfam" id="PF00466">
    <property type="entry name" value="Ribosomal_L10"/>
    <property type="match status" value="1"/>
</dbReference>
<dbReference type="SUPFAM" id="SSF160369">
    <property type="entry name" value="Ribosomal protein L10-like"/>
    <property type="match status" value="1"/>
</dbReference>
<dbReference type="PROSITE" id="PS01109">
    <property type="entry name" value="RIBOSOMAL_L10"/>
    <property type="match status" value="1"/>
</dbReference>
<organism>
    <name type="scientific">Chlorobaculum parvum (strain DSM 263 / NCIMB 8327)</name>
    <name type="common">Chlorobium vibrioforme subsp. thiosulfatophilum</name>
    <dbReference type="NCBI Taxonomy" id="517417"/>
    <lineage>
        <taxon>Bacteria</taxon>
        <taxon>Pseudomonadati</taxon>
        <taxon>Chlorobiota</taxon>
        <taxon>Chlorobiia</taxon>
        <taxon>Chlorobiales</taxon>
        <taxon>Chlorobiaceae</taxon>
        <taxon>Chlorobaculum</taxon>
    </lineage>
</organism>
<name>RL10_CHLP8</name>
<reference key="1">
    <citation type="submission" date="2008-06" db="EMBL/GenBank/DDBJ databases">
        <title>Complete sequence of Chlorobaculum parvum NCIB 8327.</title>
        <authorList>
            <consortium name="US DOE Joint Genome Institute"/>
            <person name="Lucas S."/>
            <person name="Copeland A."/>
            <person name="Lapidus A."/>
            <person name="Glavina del Rio T."/>
            <person name="Dalin E."/>
            <person name="Tice H."/>
            <person name="Bruce D."/>
            <person name="Goodwin L."/>
            <person name="Pitluck S."/>
            <person name="Schmutz J."/>
            <person name="Larimer F."/>
            <person name="Land M."/>
            <person name="Hauser L."/>
            <person name="Kyrpides N."/>
            <person name="Mikhailova N."/>
            <person name="Zhao F."/>
            <person name="Li T."/>
            <person name="Liu Z."/>
            <person name="Overmann J."/>
            <person name="Bryant D.A."/>
            <person name="Richardson P."/>
        </authorList>
    </citation>
    <scope>NUCLEOTIDE SEQUENCE [LARGE SCALE GENOMIC DNA]</scope>
    <source>
        <strain>DSM 263 / NCIMB 8327</strain>
    </source>
</reference>
<sequence>MMKRDKKEEIAQQIAEKFQKSQGFYFTEFQGLDVQKMGQLRLEFRKAGIEYKVVKNTLIKKALRDAAGADKLAEGLKNTTAVAFSYDDPIAPAKIIKKFSKDNEALKFKMASVDGTVFGADALPQLSEMLSKTDNIARTAGLINNMIASVPMVMNAVMRDLVSVIDQVGKLEK</sequence>
<proteinExistence type="inferred from homology"/>
<feature type="chain" id="PRO_1000120935" description="Large ribosomal subunit protein uL10">
    <location>
        <begin position="1"/>
        <end position="173"/>
    </location>
</feature>
<accession>B3QQS4</accession>
<gene>
    <name evidence="1" type="primary">rplJ</name>
    <name type="ordered locus">Cpar_1885</name>
</gene>
<comment type="function">
    <text evidence="1">Forms part of the ribosomal stalk, playing a central role in the interaction of the ribosome with GTP-bound translation factors.</text>
</comment>
<comment type="subunit">
    <text evidence="1">Part of the ribosomal stalk of the 50S ribosomal subunit. The N-terminus interacts with L11 and the large rRNA to form the base of the stalk. The C-terminus forms an elongated spine to which L12 dimers bind in a sequential fashion forming a multimeric L10(L12)X complex.</text>
</comment>
<comment type="similarity">
    <text evidence="1">Belongs to the universal ribosomal protein uL10 family.</text>
</comment>
<protein>
    <recommendedName>
        <fullName evidence="1">Large ribosomal subunit protein uL10</fullName>
    </recommendedName>
    <alternativeName>
        <fullName evidence="2">50S ribosomal protein L10</fullName>
    </alternativeName>
</protein>
<keyword id="KW-0687">Ribonucleoprotein</keyword>
<keyword id="KW-0689">Ribosomal protein</keyword>
<keyword id="KW-0694">RNA-binding</keyword>
<keyword id="KW-0699">rRNA-binding</keyword>
<evidence type="ECO:0000255" key="1">
    <source>
        <dbReference type="HAMAP-Rule" id="MF_00362"/>
    </source>
</evidence>
<evidence type="ECO:0000305" key="2"/>